<accession>P80489</accession>
<accession>O33165</accession>
<accession>Q46FA8</accession>
<reference key="1">
    <citation type="journal article" date="1998" name="Arch. Microbiol.">
        <title>Two F420-reducing hydrogenases in Methanosarcina barkeri.</title>
        <authorList>
            <person name="Vaupel M."/>
            <person name="Thauer R.K."/>
        </authorList>
    </citation>
    <scope>NUCLEOTIDE SEQUENCE [GENOMIC DNA]</scope>
</reference>
<reference key="2">
    <citation type="journal article" date="2006" name="J. Bacteriol.">
        <title>The Methanosarcina barkeri genome: comparative analysis with Methanosarcina acetivorans and Methanosarcina mazei reveals extensive rearrangement within methanosarcinal genomes.</title>
        <authorList>
            <person name="Maeder D.L."/>
            <person name="Anderson I."/>
            <person name="Brettin T.S."/>
            <person name="Bruce D.C."/>
            <person name="Gilna P."/>
            <person name="Han C.S."/>
            <person name="Lapidus A."/>
            <person name="Metcalf W.W."/>
            <person name="Saunders E."/>
            <person name="Tapia R."/>
            <person name="Sowers K.R."/>
        </authorList>
    </citation>
    <scope>NUCLEOTIDE SEQUENCE [LARGE SCALE GENOMIC DNA]</scope>
    <source>
        <strain>Fusaro / DSM 804</strain>
    </source>
</reference>
<reference key="3">
    <citation type="journal article" date="1995" name="Eur. J. Biochem.">
        <title>Biochemical characterization of the 8-hydroxy-5-deazaflavin-reactive hydrogenase from Methanosarcina barkeri Fusaro.</title>
        <authorList>
            <person name="Michel R."/>
            <person name="Massanz C."/>
            <person name="Kostka S."/>
            <person name="Richter M."/>
            <person name="Fiebig K."/>
        </authorList>
    </citation>
    <scope>PROTEIN SEQUENCE OF 2-21</scope>
</reference>
<proteinExistence type="evidence at protein level"/>
<dbReference type="EC" id="1.12.98.1"/>
<dbReference type="EMBL" id="Y13763">
    <property type="protein sequence ID" value="CAA74090.1"/>
    <property type="molecule type" value="Genomic_DNA"/>
</dbReference>
<dbReference type="EMBL" id="CP000099">
    <property type="protein sequence ID" value="AAZ69434.1"/>
    <property type="molecule type" value="Genomic_DNA"/>
</dbReference>
<dbReference type="PIR" id="S63483">
    <property type="entry name" value="S63483"/>
</dbReference>
<dbReference type="SMR" id="P80489"/>
<dbReference type="STRING" id="269797.Mbar_A0452"/>
<dbReference type="PaxDb" id="269797-Mbar_A0452"/>
<dbReference type="GeneID" id="24821962"/>
<dbReference type="KEGG" id="mba:Mbar_A0452"/>
<dbReference type="eggNOG" id="arCOG01549">
    <property type="taxonomic scope" value="Archaea"/>
</dbReference>
<dbReference type="HOGENOM" id="CLU_044556_1_0_2"/>
<dbReference type="OrthoDB" id="42371at2157"/>
<dbReference type="BioCyc" id="MetaCyc:MONOMER-12647"/>
<dbReference type="BRENDA" id="1.12.98.1">
    <property type="organism ID" value="3250"/>
</dbReference>
<dbReference type="GO" id="GO:0005886">
    <property type="term" value="C:plasma membrane"/>
    <property type="evidence" value="ECO:0007669"/>
    <property type="project" value="UniProtKB-SubCell"/>
</dbReference>
<dbReference type="GO" id="GO:0050454">
    <property type="term" value="F:coenzyme F420 hydrogenase activity"/>
    <property type="evidence" value="ECO:0007669"/>
    <property type="project" value="UniProtKB-EC"/>
</dbReference>
<dbReference type="GO" id="GO:0008901">
    <property type="term" value="F:ferredoxin hydrogenase activity"/>
    <property type="evidence" value="ECO:0007669"/>
    <property type="project" value="InterPro"/>
</dbReference>
<dbReference type="GO" id="GO:0050660">
    <property type="term" value="F:flavin adenine dinucleotide binding"/>
    <property type="evidence" value="ECO:0007669"/>
    <property type="project" value="InterPro"/>
</dbReference>
<dbReference type="GO" id="GO:0051536">
    <property type="term" value="F:iron-sulfur cluster binding"/>
    <property type="evidence" value="ECO:0007669"/>
    <property type="project" value="InterPro"/>
</dbReference>
<dbReference type="GO" id="GO:0016151">
    <property type="term" value="F:nickel cation binding"/>
    <property type="evidence" value="ECO:0007669"/>
    <property type="project" value="InterPro"/>
</dbReference>
<dbReference type="Gene3D" id="1.10.645.10">
    <property type="entry name" value="Cytochrome-c3 Hydrogenase, chain B"/>
    <property type="match status" value="1"/>
</dbReference>
<dbReference type="InterPro" id="IPR017682">
    <property type="entry name" value="Coenz_F420_hydrogenase_asu"/>
</dbReference>
<dbReference type="InterPro" id="IPR001501">
    <property type="entry name" value="Ni-dep_hyd_lsu"/>
</dbReference>
<dbReference type="InterPro" id="IPR018194">
    <property type="entry name" value="Ni-dep_hyd_lsu_Ni_BS"/>
</dbReference>
<dbReference type="InterPro" id="IPR029014">
    <property type="entry name" value="NiFe-Hase_large"/>
</dbReference>
<dbReference type="NCBIfam" id="TIGR03295">
    <property type="entry name" value="frhA"/>
    <property type="match status" value="1"/>
</dbReference>
<dbReference type="PANTHER" id="PTHR43600:SF1">
    <property type="entry name" value="COENZYME F420 HYDROGENASE SUBUNIT ALPHA"/>
    <property type="match status" value="1"/>
</dbReference>
<dbReference type="PANTHER" id="PTHR43600">
    <property type="entry name" value="COENZYME F420 HYDROGENASE, SUBUNIT ALPHA"/>
    <property type="match status" value="1"/>
</dbReference>
<dbReference type="Pfam" id="PF00374">
    <property type="entry name" value="NiFeSe_Hases"/>
    <property type="match status" value="2"/>
</dbReference>
<dbReference type="SUPFAM" id="SSF56762">
    <property type="entry name" value="HydB/Nqo4-like"/>
    <property type="match status" value="1"/>
</dbReference>
<dbReference type="PROSITE" id="PS00507">
    <property type="entry name" value="NI_HGENASE_L_1"/>
    <property type="match status" value="1"/>
</dbReference>
<dbReference type="PROSITE" id="PS00508">
    <property type="entry name" value="NI_HGENASE_L_2"/>
    <property type="match status" value="1"/>
</dbReference>
<comment type="function">
    <text>Reduces the physiological low-potential two-electron acceptor coenzyme F420, and the artificial one-electron acceptor methylviologen.</text>
</comment>
<comment type="catalytic activity">
    <reaction>
        <text>oxidized coenzyme F420-(gamma-L-Glu)(n) + H2 + H(+) = reduced coenzyme F420-(gamma-L-Glu)(n)</text>
        <dbReference type="Rhea" id="RHEA:23760"/>
        <dbReference type="Rhea" id="RHEA-COMP:12939"/>
        <dbReference type="Rhea" id="RHEA-COMP:14378"/>
        <dbReference type="ChEBI" id="CHEBI:15378"/>
        <dbReference type="ChEBI" id="CHEBI:18276"/>
        <dbReference type="ChEBI" id="CHEBI:133980"/>
        <dbReference type="ChEBI" id="CHEBI:139511"/>
        <dbReference type="EC" id="1.12.98.1"/>
    </reaction>
</comment>
<comment type="cofactor">
    <cofactor>
        <name>Ni(2+)</name>
        <dbReference type="ChEBI" id="CHEBI:49786"/>
    </cofactor>
</comment>
<comment type="cofactor">
    <cofactor>
        <name>iron-sulfur cluster</name>
        <dbReference type="ChEBI" id="CHEBI:30408"/>
    </cofactor>
</comment>
<comment type="cofactor">
    <cofactor>
        <name>FAD</name>
        <dbReference type="ChEBI" id="CHEBI:57692"/>
    </cofactor>
</comment>
<comment type="subunit">
    <text>Pentamer of two alpha chains, two beta chains and a gamma chain.</text>
</comment>
<comment type="subcellular location">
    <subcellularLocation>
        <location>Cell membrane</location>
        <topology>Peripheral membrane protein</topology>
    </subcellularLocation>
</comment>
<comment type="similarity">
    <text evidence="3">Belongs to the [NiFe]/[NiFeSe] hydrogenase large subunit family.</text>
</comment>
<gene>
    <name type="primary">frhA</name>
    <name type="ordered locus">Mbar_A0452</name>
</gene>
<organism>
    <name type="scientific">Methanosarcina barkeri (strain Fusaro / DSM 804)</name>
    <dbReference type="NCBI Taxonomy" id="269797"/>
    <lineage>
        <taxon>Archaea</taxon>
        <taxon>Methanobacteriati</taxon>
        <taxon>Methanobacteriota</taxon>
        <taxon>Stenosarchaea group</taxon>
        <taxon>Methanomicrobia</taxon>
        <taxon>Methanosarcinales</taxon>
        <taxon>Methanosarcinaceae</taxon>
        <taxon>Methanosarcina</taxon>
    </lineage>
</organism>
<evidence type="ECO:0000255" key="1"/>
<evidence type="ECO:0000269" key="2">
    <source>
    </source>
</evidence>
<evidence type="ECO:0000305" key="3"/>
<protein>
    <recommendedName>
        <fullName>Coenzyme F420 hydrogenase subunit alpha</fullName>
        <ecNumber>1.12.98.1</ecNumber>
    </recommendedName>
    <alternativeName>
        <fullName>8-hydroxy-5-deazaflavin-reducing hydrogenase subunit alpha</fullName>
        <shortName>FRH</shortName>
    </alternativeName>
</protein>
<sequence>MTKVVEISPTTRLEGHSKLTLKVDDQGIVERGDWLSITPVRGIEKLAIGKTMEQVPKIASRVCGICPIAHTLASTEAMEASIGCEIPTDAKLLRTILHAANRIHSIALHNILILPDFYIPGTEKKFNLFANEQPARSVMARIVRIREIAQTIGAIAGGEAIHPSNPRIGGMYYNVSPRAKQKMADLAKEGLVLVHEQMEFMFDVIRNMQNREFVEVAGKQIPLPKKLGYHNQGVMATASMYGSSSLDDNPTWDFTRWKETRPWDWYMGEVTIDLEDPSYPIGGTTKIGTKANPQMEACTGVPTYDGQPVEVGPRARLATFKNFDEKGTFAQHIARQMEYPDCCYTILRCLDNLNTSGKVLADHIPQGDGSMGWAANEAPRGSNIHLARVKDGKVLWYDMLVPTTWNFPTCSRALTGAPWQIAEMVVRAYDPCVSCATHMIVVNEEEKIVTQKLMQW</sequence>
<feature type="initiator methionine" description="Removed" evidence="2">
    <location>
        <position position="1"/>
    </location>
</feature>
<feature type="chain" id="PRO_0000199721" description="Coenzyme F420 hydrogenase subunit alpha">
    <location>
        <begin position="2"/>
        <end position="456"/>
    </location>
</feature>
<feature type="binding site" evidence="1">
    <location>
        <position position="63"/>
    </location>
    <ligand>
        <name>Ni(2+)</name>
        <dbReference type="ChEBI" id="CHEBI:49786"/>
    </ligand>
</feature>
<feature type="binding site" evidence="1">
    <location>
        <position position="66"/>
    </location>
    <ligand>
        <name>Ni(2+)</name>
        <dbReference type="ChEBI" id="CHEBI:49786"/>
    </ligand>
</feature>
<feature type="binding site" evidence="1">
    <location>
        <position position="432"/>
    </location>
    <ligand>
        <name>Ni(2+)</name>
        <dbReference type="ChEBI" id="CHEBI:49786"/>
    </ligand>
</feature>
<feature type="binding site" evidence="1">
    <location>
        <position position="435"/>
    </location>
    <ligand>
        <name>Ni(2+)</name>
        <dbReference type="ChEBI" id="CHEBI:49786"/>
    </ligand>
</feature>
<keyword id="KW-1003">Cell membrane</keyword>
<keyword id="KW-0903">Direct protein sequencing</keyword>
<keyword id="KW-0274">FAD</keyword>
<keyword id="KW-0285">Flavoprotein</keyword>
<keyword id="KW-0472">Membrane</keyword>
<keyword id="KW-0479">Metal-binding</keyword>
<keyword id="KW-0533">Nickel</keyword>
<keyword id="KW-0560">Oxidoreductase</keyword>
<name>FRHA_METBF</name>